<accession>C3MQ62</accession>
<proteinExistence type="inferred from homology"/>
<reference key="1">
    <citation type="journal article" date="2009" name="Proc. Natl. Acad. Sci. U.S.A.">
        <title>Biogeography of the Sulfolobus islandicus pan-genome.</title>
        <authorList>
            <person name="Reno M.L."/>
            <person name="Held N.L."/>
            <person name="Fields C.J."/>
            <person name="Burke P.V."/>
            <person name="Whitaker R.J."/>
        </authorList>
    </citation>
    <scope>NUCLEOTIDE SEQUENCE [LARGE SCALE GENOMIC DNA]</scope>
    <source>
        <strain>L.S.2.15 / Lassen #1</strain>
    </source>
</reference>
<protein>
    <recommendedName>
        <fullName evidence="1">Large ribosomal subunit protein uL2</fullName>
    </recommendedName>
    <alternativeName>
        <fullName evidence="3">50S ribosomal protein L2</fullName>
    </alternativeName>
</protein>
<gene>
    <name evidence="1" type="primary">rpl2</name>
    <name type="ordered locus">LS215_1518</name>
</gene>
<organism>
    <name type="scientific">Saccharolobus islandicus (strain L.S.2.15 / Lassen #1)</name>
    <name type="common">Sulfolobus islandicus</name>
    <dbReference type="NCBI Taxonomy" id="429572"/>
    <lineage>
        <taxon>Archaea</taxon>
        <taxon>Thermoproteota</taxon>
        <taxon>Thermoprotei</taxon>
        <taxon>Sulfolobales</taxon>
        <taxon>Sulfolobaceae</taxon>
        <taxon>Saccharolobus</taxon>
    </lineage>
</organism>
<comment type="function">
    <text evidence="1">One of the primary rRNA binding proteins. Required for association of the 30S and 50S subunits to form the 70S ribosome, for tRNA binding and peptide bond formation. It has been suggested to have peptidyltransferase activity; this is somewhat controversial. Makes several contacts with the 16S rRNA in the 70S ribosome.</text>
</comment>
<comment type="subunit">
    <text evidence="1">Part of the 50S ribosomal subunit. Forms a bridge to the 30S subunit in the 70S ribosome.</text>
</comment>
<comment type="similarity">
    <text evidence="1">Belongs to the universal ribosomal protein uL2 family.</text>
</comment>
<feature type="chain" id="PRO_1000214462" description="Large ribosomal subunit protein uL2">
    <location>
        <begin position="1"/>
        <end position="238"/>
    </location>
</feature>
<feature type="region of interest" description="Disordered" evidence="2">
    <location>
        <begin position="200"/>
        <end position="238"/>
    </location>
</feature>
<feature type="compositionally biased region" description="Polar residues" evidence="2">
    <location>
        <begin position="206"/>
        <end position="216"/>
    </location>
</feature>
<feature type="compositionally biased region" description="Basic residues" evidence="2">
    <location>
        <begin position="223"/>
        <end position="238"/>
    </location>
</feature>
<keyword id="KW-0687">Ribonucleoprotein</keyword>
<keyword id="KW-0689">Ribosomal protein</keyword>
<keyword id="KW-0694">RNA-binding</keyword>
<keyword id="KW-0699">rRNA-binding</keyword>
<sequence length="238" mass="25234">MGKNLLQQRAGKGSPTFRSPSWLRIGKVRYPNIFGHLVGKVIDIVHNPGMNAPVAIIKLENGTKFLTQAIQGLVINQKIEFGKGSPIANGNVIEIGDAPEGTIVCNVEENFGDGGKYARSAGSYAVVVGKSGDKVLIKLPSDKIKAVSNKARATVGVVAGGGVVEKPLLKAGANYWKYKVKAKKWPIVRGVAMNVVDHPHGGGLHQSVSRPSTVSRNAPPGRKVGHIAARRTGRKEGK</sequence>
<name>RL2_SACI2</name>
<dbReference type="EMBL" id="CP001399">
    <property type="protein sequence ID" value="ACP35525.1"/>
    <property type="molecule type" value="Genomic_DNA"/>
</dbReference>
<dbReference type="RefSeq" id="WP_012711421.1">
    <property type="nucleotide sequence ID" value="NC_012589.1"/>
</dbReference>
<dbReference type="SMR" id="C3MQ62"/>
<dbReference type="KEGG" id="sis:LS215_1518"/>
<dbReference type="HOGENOM" id="CLU_036235_0_1_2"/>
<dbReference type="OrthoDB" id="5987at2157"/>
<dbReference type="Proteomes" id="UP000001747">
    <property type="component" value="Chromosome"/>
</dbReference>
<dbReference type="GO" id="GO:0022625">
    <property type="term" value="C:cytosolic large ribosomal subunit"/>
    <property type="evidence" value="ECO:0007669"/>
    <property type="project" value="TreeGrafter"/>
</dbReference>
<dbReference type="GO" id="GO:0019843">
    <property type="term" value="F:rRNA binding"/>
    <property type="evidence" value="ECO:0007669"/>
    <property type="project" value="UniProtKB-UniRule"/>
</dbReference>
<dbReference type="GO" id="GO:0003735">
    <property type="term" value="F:structural constituent of ribosome"/>
    <property type="evidence" value="ECO:0007669"/>
    <property type="project" value="InterPro"/>
</dbReference>
<dbReference type="GO" id="GO:0002181">
    <property type="term" value="P:cytoplasmic translation"/>
    <property type="evidence" value="ECO:0007669"/>
    <property type="project" value="TreeGrafter"/>
</dbReference>
<dbReference type="FunFam" id="2.30.30.30:FF:000001">
    <property type="entry name" value="50S ribosomal protein L2"/>
    <property type="match status" value="1"/>
</dbReference>
<dbReference type="FunFam" id="4.10.950.10:FF:000002">
    <property type="entry name" value="60S ribosomal protein L2"/>
    <property type="match status" value="1"/>
</dbReference>
<dbReference type="Gene3D" id="2.30.30.30">
    <property type="match status" value="1"/>
</dbReference>
<dbReference type="Gene3D" id="2.40.50.140">
    <property type="entry name" value="Nucleic acid-binding proteins"/>
    <property type="match status" value="1"/>
</dbReference>
<dbReference type="Gene3D" id="4.10.950.10">
    <property type="entry name" value="Ribosomal protein L2, domain 3"/>
    <property type="match status" value="1"/>
</dbReference>
<dbReference type="HAMAP" id="MF_01320_A">
    <property type="entry name" value="Ribosomal_uL2_A"/>
    <property type="match status" value="1"/>
</dbReference>
<dbReference type="InterPro" id="IPR012340">
    <property type="entry name" value="NA-bd_OB-fold"/>
</dbReference>
<dbReference type="InterPro" id="IPR014722">
    <property type="entry name" value="Rib_uL2_dom2"/>
</dbReference>
<dbReference type="InterPro" id="IPR002171">
    <property type="entry name" value="Ribosomal_uL2"/>
</dbReference>
<dbReference type="InterPro" id="IPR023672">
    <property type="entry name" value="Ribosomal_uL2_arc_euk"/>
</dbReference>
<dbReference type="InterPro" id="IPR022669">
    <property type="entry name" value="Ribosomal_uL2_C"/>
</dbReference>
<dbReference type="InterPro" id="IPR014726">
    <property type="entry name" value="Ribosomal_uL2_dom3"/>
</dbReference>
<dbReference type="InterPro" id="IPR022666">
    <property type="entry name" value="Ribosomal_uL2_RNA-bd_dom"/>
</dbReference>
<dbReference type="InterPro" id="IPR008991">
    <property type="entry name" value="Translation_prot_SH3-like_sf"/>
</dbReference>
<dbReference type="NCBIfam" id="NF007180">
    <property type="entry name" value="PRK09612.1"/>
    <property type="match status" value="1"/>
</dbReference>
<dbReference type="PANTHER" id="PTHR13691:SF16">
    <property type="entry name" value="LARGE RIBOSOMAL SUBUNIT PROTEIN UL2"/>
    <property type="match status" value="1"/>
</dbReference>
<dbReference type="PANTHER" id="PTHR13691">
    <property type="entry name" value="RIBOSOMAL PROTEIN L2"/>
    <property type="match status" value="1"/>
</dbReference>
<dbReference type="Pfam" id="PF00181">
    <property type="entry name" value="Ribosomal_L2"/>
    <property type="match status" value="1"/>
</dbReference>
<dbReference type="Pfam" id="PF03947">
    <property type="entry name" value="Ribosomal_L2_C"/>
    <property type="match status" value="1"/>
</dbReference>
<dbReference type="PIRSF" id="PIRSF002158">
    <property type="entry name" value="Ribosomal_L2"/>
    <property type="match status" value="1"/>
</dbReference>
<dbReference type="SMART" id="SM01383">
    <property type="entry name" value="Ribosomal_L2"/>
    <property type="match status" value="1"/>
</dbReference>
<dbReference type="SMART" id="SM01382">
    <property type="entry name" value="Ribosomal_L2_C"/>
    <property type="match status" value="1"/>
</dbReference>
<dbReference type="SUPFAM" id="SSF50249">
    <property type="entry name" value="Nucleic acid-binding proteins"/>
    <property type="match status" value="1"/>
</dbReference>
<dbReference type="SUPFAM" id="SSF50104">
    <property type="entry name" value="Translation proteins SH3-like domain"/>
    <property type="match status" value="1"/>
</dbReference>
<evidence type="ECO:0000255" key="1">
    <source>
        <dbReference type="HAMAP-Rule" id="MF_01320"/>
    </source>
</evidence>
<evidence type="ECO:0000256" key="2">
    <source>
        <dbReference type="SAM" id="MobiDB-lite"/>
    </source>
</evidence>
<evidence type="ECO:0000305" key="3"/>